<proteinExistence type="inferred from homology"/>
<gene>
    <name evidence="1" type="primary">rplM</name>
    <name type="ordered locus">RHECIAT_CH0001639</name>
</gene>
<comment type="function">
    <text evidence="1">This protein is one of the early assembly proteins of the 50S ribosomal subunit, although it is not seen to bind rRNA by itself. It is important during the early stages of 50S assembly.</text>
</comment>
<comment type="subunit">
    <text evidence="1">Part of the 50S ribosomal subunit.</text>
</comment>
<comment type="similarity">
    <text evidence="1">Belongs to the universal ribosomal protein uL13 family.</text>
</comment>
<dbReference type="EMBL" id="CP001074">
    <property type="protein sequence ID" value="ACE90616.1"/>
    <property type="molecule type" value="Genomic_DNA"/>
</dbReference>
<dbReference type="SMR" id="B3PVW4"/>
<dbReference type="KEGG" id="rec:RHECIAT_CH0001639"/>
<dbReference type="eggNOG" id="COG0102">
    <property type="taxonomic scope" value="Bacteria"/>
</dbReference>
<dbReference type="HOGENOM" id="CLU_082184_2_0_5"/>
<dbReference type="Proteomes" id="UP000008817">
    <property type="component" value="Chromosome"/>
</dbReference>
<dbReference type="GO" id="GO:0022625">
    <property type="term" value="C:cytosolic large ribosomal subunit"/>
    <property type="evidence" value="ECO:0007669"/>
    <property type="project" value="TreeGrafter"/>
</dbReference>
<dbReference type="GO" id="GO:0003729">
    <property type="term" value="F:mRNA binding"/>
    <property type="evidence" value="ECO:0007669"/>
    <property type="project" value="TreeGrafter"/>
</dbReference>
<dbReference type="GO" id="GO:0003735">
    <property type="term" value="F:structural constituent of ribosome"/>
    <property type="evidence" value="ECO:0007669"/>
    <property type="project" value="InterPro"/>
</dbReference>
<dbReference type="GO" id="GO:0017148">
    <property type="term" value="P:negative regulation of translation"/>
    <property type="evidence" value="ECO:0007669"/>
    <property type="project" value="TreeGrafter"/>
</dbReference>
<dbReference type="GO" id="GO:0006412">
    <property type="term" value="P:translation"/>
    <property type="evidence" value="ECO:0007669"/>
    <property type="project" value="UniProtKB-UniRule"/>
</dbReference>
<dbReference type="CDD" id="cd00392">
    <property type="entry name" value="Ribosomal_L13"/>
    <property type="match status" value="1"/>
</dbReference>
<dbReference type="FunFam" id="3.90.1180.10:FF:000001">
    <property type="entry name" value="50S ribosomal protein L13"/>
    <property type="match status" value="1"/>
</dbReference>
<dbReference type="Gene3D" id="3.90.1180.10">
    <property type="entry name" value="Ribosomal protein L13"/>
    <property type="match status" value="1"/>
</dbReference>
<dbReference type="HAMAP" id="MF_01366">
    <property type="entry name" value="Ribosomal_uL13"/>
    <property type="match status" value="1"/>
</dbReference>
<dbReference type="InterPro" id="IPR005822">
    <property type="entry name" value="Ribosomal_uL13"/>
</dbReference>
<dbReference type="InterPro" id="IPR005823">
    <property type="entry name" value="Ribosomal_uL13_bac-type"/>
</dbReference>
<dbReference type="InterPro" id="IPR036899">
    <property type="entry name" value="Ribosomal_uL13_sf"/>
</dbReference>
<dbReference type="NCBIfam" id="TIGR01066">
    <property type="entry name" value="rplM_bact"/>
    <property type="match status" value="1"/>
</dbReference>
<dbReference type="PANTHER" id="PTHR11545:SF2">
    <property type="entry name" value="LARGE RIBOSOMAL SUBUNIT PROTEIN UL13M"/>
    <property type="match status" value="1"/>
</dbReference>
<dbReference type="PANTHER" id="PTHR11545">
    <property type="entry name" value="RIBOSOMAL PROTEIN L13"/>
    <property type="match status" value="1"/>
</dbReference>
<dbReference type="Pfam" id="PF00572">
    <property type="entry name" value="Ribosomal_L13"/>
    <property type="match status" value="1"/>
</dbReference>
<dbReference type="PIRSF" id="PIRSF002181">
    <property type="entry name" value="Ribosomal_L13"/>
    <property type="match status" value="1"/>
</dbReference>
<dbReference type="SUPFAM" id="SSF52161">
    <property type="entry name" value="Ribosomal protein L13"/>
    <property type="match status" value="1"/>
</dbReference>
<feature type="chain" id="PRO_1000144169" description="Large ribosomal subunit protein uL13">
    <location>
        <begin position="1"/>
        <end position="154"/>
    </location>
</feature>
<sequence length="154" mass="17276">MATFSQKPAEVEKKWVIIDAEGLVVGRLASIIAMRLRGKHKATFTPHVDDGDNVIVINADKVVFTGKKYSDKVYYWHTGYAGGIKERTARQIIEGRFPERVLEKAVERMVPRGPLGRRQMKNLRVYAGSNHPHEAQQPVALDVAALNKKNVRSA</sequence>
<reference key="1">
    <citation type="journal article" date="2010" name="Appl. Environ. Microbiol.">
        <title>Conserved symbiotic plasmid DNA sequences in the multireplicon pangenomic structure of Rhizobium etli.</title>
        <authorList>
            <person name="Gonzalez V."/>
            <person name="Acosta J.L."/>
            <person name="Santamaria R.I."/>
            <person name="Bustos P."/>
            <person name="Fernandez J.L."/>
            <person name="Hernandez Gonzalez I.L."/>
            <person name="Diaz R."/>
            <person name="Flores M."/>
            <person name="Palacios R."/>
            <person name="Mora J."/>
            <person name="Davila G."/>
        </authorList>
    </citation>
    <scope>NUCLEOTIDE SEQUENCE [LARGE SCALE GENOMIC DNA]</scope>
    <source>
        <strain>CIAT 652</strain>
    </source>
</reference>
<name>RL13_RHIE6</name>
<organism>
    <name type="scientific">Rhizobium etli (strain CIAT 652)</name>
    <dbReference type="NCBI Taxonomy" id="491916"/>
    <lineage>
        <taxon>Bacteria</taxon>
        <taxon>Pseudomonadati</taxon>
        <taxon>Pseudomonadota</taxon>
        <taxon>Alphaproteobacteria</taxon>
        <taxon>Hyphomicrobiales</taxon>
        <taxon>Rhizobiaceae</taxon>
        <taxon>Rhizobium/Agrobacterium group</taxon>
        <taxon>Rhizobium</taxon>
    </lineage>
</organism>
<accession>B3PVW4</accession>
<protein>
    <recommendedName>
        <fullName evidence="1">Large ribosomal subunit protein uL13</fullName>
    </recommendedName>
    <alternativeName>
        <fullName evidence="2">50S ribosomal protein L13</fullName>
    </alternativeName>
</protein>
<evidence type="ECO:0000255" key="1">
    <source>
        <dbReference type="HAMAP-Rule" id="MF_01366"/>
    </source>
</evidence>
<evidence type="ECO:0000305" key="2"/>
<keyword id="KW-0687">Ribonucleoprotein</keyword>
<keyword id="KW-0689">Ribosomal protein</keyword>